<sequence>MILLIDVGNTNIVLGIHDNEKYIASWRISTDSKKTSDEYSIQVMQLFNQAKLNPEEVEGIIISSVVPNIMHSLENMVRKCFCKEPIVVGPGIKTGINIKYDNPKEVGADRIVNAVAAFEKHKKPMIIIDFGTATTFCAITEKGDYLGGNICPGIQISADALFERAAKLPRIELEKPKSVICKNTVTSMQAGIIYGYIGKVEYIVKRMKKEMMDLGEKEPFVLATGGLAKLVYSETDVIDEVDRKLTLEGLKILYEKNKE</sequence>
<evidence type="ECO:0000255" key="1">
    <source>
        <dbReference type="HAMAP-Rule" id="MF_01274"/>
    </source>
</evidence>
<organism>
    <name type="scientific">Clostridium perfringens (strain SM101 / Type A)</name>
    <dbReference type="NCBI Taxonomy" id="289380"/>
    <lineage>
        <taxon>Bacteria</taxon>
        <taxon>Bacillati</taxon>
        <taxon>Bacillota</taxon>
        <taxon>Clostridia</taxon>
        <taxon>Eubacteriales</taxon>
        <taxon>Clostridiaceae</taxon>
        <taxon>Clostridium</taxon>
    </lineage>
</organism>
<protein>
    <recommendedName>
        <fullName evidence="1">Type III pantothenate kinase</fullName>
        <ecNumber evidence="1">2.7.1.33</ecNumber>
    </recommendedName>
    <alternativeName>
        <fullName evidence="1">PanK-III</fullName>
    </alternativeName>
    <alternativeName>
        <fullName evidence="1">Pantothenic acid kinase</fullName>
    </alternativeName>
</protein>
<feature type="chain" id="PRO_0000267514" description="Type III pantothenate kinase">
    <location>
        <begin position="1"/>
        <end position="259"/>
    </location>
</feature>
<feature type="active site" description="Proton acceptor" evidence="1">
    <location>
        <position position="109"/>
    </location>
</feature>
<feature type="binding site" evidence="1">
    <location>
        <begin position="6"/>
        <end position="13"/>
    </location>
    <ligand>
        <name>ATP</name>
        <dbReference type="ChEBI" id="CHEBI:30616"/>
    </ligand>
</feature>
<feature type="binding site" evidence="1">
    <location>
        <position position="100"/>
    </location>
    <ligand>
        <name>substrate</name>
    </ligand>
</feature>
<feature type="binding site" evidence="1">
    <location>
        <begin position="107"/>
        <end position="110"/>
    </location>
    <ligand>
        <name>substrate</name>
    </ligand>
</feature>
<feature type="binding site" evidence="1">
    <location>
        <position position="129"/>
    </location>
    <ligand>
        <name>K(+)</name>
        <dbReference type="ChEBI" id="CHEBI:29103"/>
    </ligand>
</feature>
<feature type="binding site" evidence="1">
    <location>
        <position position="132"/>
    </location>
    <ligand>
        <name>ATP</name>
        <dbReference type="ChEBI" id="CHEBI:30616"/>
    </ligand>
</feature>
<feature type="binding site" evidence="1">
    <location>
        <position position="184"/>
    </location>
    <ligand>
        <name>substrate</name>
    </ligand>
</feature>
<reference key="1">
    <citation type="journal article" date="2006" name="Genome Res.">
        <title>Skewed genomic variability in strains of the toxigenic bacterial pathogen, Clostridium perfringens.</title>
        <authorList>
            <person name="Myers G.S.A."/>
            <person name="Rasko D.A."/>
            <person name="Cheung J.K."/>
            <person name="Ravel J."/>
            <person name="Seshadri R."/>
            <person name="DeBoy R.T."/>
            <person name="Ren Q."/>
            <person name="Varga J."/>
            <person name="Awad M.M."/>
            <person name="Brinkac L.M."/>
            <person name="Daugherty S.C."/>
            <person name="Haft D.H."/>
            <person name="Dodson R.J."/>
            <person name="Madupu R."/>
            <person name="Nelson W.C."/>
            <person name="Rosovitz M.J."/>
            <person name="Sullivan S.A."/>
            <person name="Khouri H."/>
            <person name="Dimitrov G.I."/>
            <person name="Watkins K.L."/>
            <person name="Mulligan S."/>
            <person name="Benton J."/>
            <person name="Radune D."/>
            <person name="Fisher D.J."/>
            <person name="Atkins H.S."/>
            <person name="Hiscox T."/>
            <person name="Jost B.H."/>
            <person name="Billington S.J."/>
            <person name="Songer J.G."/>
            <person name="McClane B.A."/>
            <person name="Titball R.W."/>
            <person name="Rood J.I."/>
            <person name="Melville S.B."/>
            <person name="Paulsen I.T."/>
        </authorList>
    </citation>
    <scope>NUCLEOTIDE SEQUENCE [LARGE SCALE GENOMIC DNA]</scope>
    <source>
        <strain>SM101 / Type A</strain>
    </source>
</reference>
<gene>
    <name evidence="1" type="primary">coaX</name>
    <name type="ordered locus">CPR_2470</name>
</gene>
<proteinExistence type="inferred from homology"/>
<name>COAX_CLOPS</name>
<keyword id="KW-0067">ATP-binding</keyword>
<keyword id="KW-0173">Coenzyme A biosynthesis</keyword>
<keyword id="KW-0963">Cytoplasm</keyword>
<keyword id="KW-0418">Kinase</keyword>
<keyword id="KW-0479">Metal-binding</keyword>
<keyword id="KW-0547">Nucleotide-binding</keyword>
<keyword id="KW-0630">Potassium</keyword>
<keyword id="KW-0808">Transferase</keyword>
<comment type="function">
    <text evidence="1">Catalyzes the phosphorylation of pantothenate (Pan), the first step in CoA biosynthesis.</text>
</comment>
<comment type="catalytic activity">
    <reaction evidence="1">
        <text>(R)-pantothenate + ATP = (R)-4'-phosphopantothenate + ADP + H(+)</text>
        <dbReference type="Rhea" id="RHEA:16373"/>
        <dbReference type="ChEBI" id="CHEBI:10986"/>
        <dbReference type="ChEBI" id="CHEBI:15378"/>
        <dbReference type="ChEBI" id="CHEBI:29032"/>
        <dbReference type="ChEBI" id="CHEBI:30616"/>
        <dbReference type="ChEBI" id="CHEBI:456216"/>
        <dbReference type="EC" id="2.7.1.33"/>
    </reaction>
</comment>
<comment type="cofactor">
    <cofactor evidence="1">
        <name>NH4(+)</name>
        <dbReference type="ChEBI" id="CHEBI:28938"/>
    </cofactor>
    <cofactor evidence="1">
        <name>K(+)</name>
        <dbReference type="ChEBI" id="CHEBI:29103"/>
    </cofactor>
    <text evidence="1">A monovalent cation. Ammonium or potassium.</text>
</comment>
<comment type="pathway">
    <text evidence="1">Cofactor biosynthesis; coenzyme A biosynthesis; CoA from (R)-pantothenate: step 1/5.</text>
</comment>
<comment type="subunit">
    <text evidence="1">Homodimer.</text>
</comment>
<comment type="subcellular location">
    <subcellularLocation>
        <location evidence="1">Cytoplasm</location>
    </subcellularLocation>
</comment>
<comment type="similarity">
    <text evidence="1">Belongs to the type III pantothenate kinase family.</text>
</comment>
<dbReference type="EC" id="2.7.1.33" evidence="1"/>
<dbReference type="EMBL" id="CP000312">
    <property type="protein sequence ID" value="ABG85557.1"/>
    <property type="molecule type" value="Genomic_DNA"/>
</dbReference>
<dbReference type="RefSeq" id="WP_003450343.1">
    <property type="nucleotide sequence ID" value="NZ_CAXVKH010000003.1"/>
</dbReference>
<dbReference type="SMR" id="Q0SQ83"/>
<dbReference type="KEGG" id="cpr:CPR_2470"/>
<dbReference type="UniPathway" id="UPA00241">
    <property type="reaction ID" value="UER00352"/>
</dbReference>
<dbReference type="Proteomes" id="UP000001824">
    <property type="component" value="Chromosome"/>
</dbReference>
<dbReference type="GO" id="GO:0005737">
    <property type="term" value="C:cytoplasm"/>
    <property type="evidence" value="ECO:0007669"/>
    <property type="project" value="UniProtKB-SubCell"/>
</dbReference>
<dbReference type="GO" id="GO:0005524">
    <property type="term" value="F:ATP binding"/>
    <property type="evidence" value="ECO:0007669"/>
    <property type="project" value="UniProtKB-UniRule"/>
</dbReference>
<dbReference type="GO" id="GO:0046872">
    <property type="term" value="F:metal ion binding"/>
    <property type="evidence" value="ECO:0007669"/>
    <property type="project" value="UniProtKB-KW"/>
</dbReference>
<dbReference type="GO" id="GO:0004594">
    <property type="term" value="F:pantothenate kinase activity"/>
    <property type="evidence" value="ECO:0007669"/>
    <property type="project" value="UniProtKB-UniRule"/>
</dbReference>
<dbReference type="GO" id="GO:0015937">
    <property type="term" value="P:coenzyme A biosynthetic process"/>
    <property type="evidence" value="ECO:0007669"/>
    <property type="project" value="UniProtKB-UniRule"/>
</dbReference>
<dbReference type="CDD" id="cd24015">
    <property type="entry name" value="ASKHA_NBD_PanK-III"/>
    <property type="match status" value="1"/>
</dbReference>
<dbReference type="Gene3D" id="3.30.420.40">
    <property type="match status" value="2"/>
</dbReference>
<dbReference type="HAMAP" id="MF_01274">
    <property type="entry name" value="Pantothen_kinase_3"/>
    <property type="match status" value="1"/>
</dbReference>
<dbReference type="InterPro" id="IPR043129">
    <property type="entry name" value="ATPase_NBD"/>
</dbReference>
<dbReference type="InterPro" id="IPR004619">
    <property type="entry name" value="Type_III_PanK"/>
</dbReference>
<dbReference type="NCBIfam" id="TIGR00671">
    <property type="entry name" value="baf"/>
    <property type="match status" value="1"/>
</dbReference>
<dbReference type="NCBIfam" id="NF009847">
    <property type="entry name" value="PRK13318.1-5"/>
    <property type="match status" value="1"/>
</dbReference>
<dbReference type="NCBIfam" id="NF009848">
    <property type="entry name" value="PRK13318.1-6"/>
    <property type="match status" value="1"/>
</dbReference>
<dbReference type="NCBIfam" id="NF009855">
    <property type="entry name" value="PRK13321.1"/>
    <property type="match status" value="1"/>
</dbReference>
<dbReference type="PANTHER" id="PTHR34265">
    <property type="entry name" value="TYPE III PANTOTHENATE KINASE"/>
    <property type="match status" value="1"/>
</dbReference>
<dbReference type="PANTHER" id="PTHR34265:SF1">
    <property type="entry name" value="TYPE III PANTOTHENATE KINASE"/>
    <property type="match status" value="1"/>
</dbReference>
<dbReference type="Pfam" id="PF03309">
    <property type="entry name" value="Pan_kinase"/>
    <property type="match status" value="1"/>
</dbReference>
<dbReference type="SUPFAM" id="SSF53067">
    <property type="entry name" value="Actin-like ATPase domain"/>
    <property type="match status" value="2"/>
</dbReference>
<accession>Q0SQ83</accession>